<name>RIMM_VIBVY</name>
<accession>Q7MHT2</accession>
<organism>
    <name type="scientific">Vibrio vulnificus (strain YJ016)</name>
    <dbReference type="NCBI Taxonomy" id="196600"/>
    <lineage>
        <taxon>Bacteria</taxon>
        <taxon>Pseudomonadati</taxon>
        <taxon>Pseudomonadota</taxon>
        <taxon>Gammaproteobacteria</taxon>
        <taxon>Vibrionales</taxon>
        <taxon>Vibrionaceae</taxon>
        <taxon>Vibrio</taxon>
    </lineage>
</organism>
<reference key="1">
    <citation type="journal article" date="2003" name="Genome Res.">
        <title>Comparative genome analysis of Vibrio vulnificus, a marine pathogen.</title>
        <authorList>
            <person name="Chen C.-Y."/>
            <person name="Wu K.-M."/>
            <person name="Chang Y.-C."/>
            <person name="Chang C.-H."/>
            <person name="Tsai H.-C."/>
            <person name="Liao T.-L."/>
            <person name="Liu Y.-M."/>
            <person name="Chen H.-J."/>
            <person name="Shen A.B.-T."/>
            <person name="Li J.-C."/>
            <person name="Su T.-L."/>
            <person name="Shao C.-P."/>
            <person name="Lee C.-T."/>
            <person name="Hor L.-I."/>
            <person name="Tsai S.-F."/>
        </authorList>
    </citation>
    <scope>NUCLEOTIDE SEQUENCE [LARGE SCALE GENOMIC DNA]</scope>
    <source>
        <strain>YJ016</strain>
    </source>
</reference>
<dbReference type="EMBL" id="BA000037">
    <property type="protein sequence ID" value="BAC95551.1"/>
    <property type="molecule type" value="Genomic_DNA"/>
</dbReference>
<dbReference type="RefSeq" id="WP_011079542.1">
    <property type="nucleotide sequence ID" value="NC_005139.1"/>
</dbReference>
<dbReference type="SMR" id="Q7MHT2"/>
<dbReference type="STRING" id="672.VV93_v1c24980"/>
<dbReference type="KEGG" id="vvy:VV2787"/>
<dbReference type="eggNOG" id="COG0806">
    <property type="taxonomic scope" value="Bacteria"/>
</dbReference>
<dbReference type="HOGENOM" id="CLU_077636_1_0_6"/>
<dbReference type="Proteomes" id="UP000002675">
    <property type="component" value="Chromosome I"/>
</dbReference>
<dbReference type="GO" id="GO:0005737">
    <property type="term" value="C:cytoplasm"/>
    <property type="evidence" value="ECO:0007669"/>
    <property type="project" value="UniProtKB-SubCell"/>
</dbReference>
<dbReference type="GO" id="GO:0005840">
    <property type="term" value="C:ribosome"/>
    <property type="evidence" value="ECO:0007669"/>
    <property type="project" value="InterPro"/>
</dbReference>
<dbReference type="GO" id="GO:0043022">
    <property type="term" value="F:ribosome binding"/>
    <property type="evidence" value="ECO:0007669"/>
    <property type="project" value="InterPro"/>
</dbReference>
<dbReference type="GO" id="GO:0042274">
    <property type="term" value="P:ribosomal small subunit biogenesis"/>
    <property type="evidence" value="ECO:0007669"/>
    <property type="project" value="UniProtKB-UniRule"/>
</dbReference>
<dbReference type="GO" id="GO:0006364">
    <property type="term" value="P:rRNA processing"/>
    <property type="evidence" value="ECO:0007669"/>
    <property type="project" value="UniProtKB-UniRule"/>
</dbReference>
<dbReference type="FunFam" id="2.30.30.240:FF:000001">
    <property type="entry name" value="Ribosome maturation factor RimM"/>
    <property type="match status" value="1"/>
</dbReference>
<dbReference type="Gene3D" id="2.30.30.240">
    <property type="entry name" value="PRC-barrel domain"/>
    <property type="match status" value="1"/>
</dbReference>
<dbReference type="Gene3D" id="2.40.30.60">
    <property type="entry name" value="RimM"/>
    <property type="match status" value="1"/>
</dbReference>
<dbReference type="HAMAP" id="MF_00014">
    <property type="entry name" value="Ribosome_mat_RimM"/>
    <property type="match status" value="1"/>
</dbReference>
<dbReference type="InterPro" id="IPR027275">
    <property type="entry name" value="PRC-brl_dom"/>
</dbReference>
<dbReference type="InterPro" id="IPR011033">
    <property type="entry name" value="PRC_barrel-like_sf"/>
</dbReference>
<dbReference type="InterPro" id="IPR011961">
    <property type="entry name" value="RimM"/>
</dbReference>
<dbReference type="InterPro" id="IPR002676">
    <property type="entry name" value="RimM_N"/>
</dbReference>
<dbReference type="InterPro" id="IPR036976">
    <property type="entry name" value="RimM_N_sf"/>
</dbReference>
<dbReference type="InterPro" id="IPR009000">
    <property type="entry name" value="Transl_B-barrel_sf"/>
</dbReference>
<dbReference type="NCBIfam" id="TIGR02273">
    <property type="entry name" value="16S_RimM"/>
    <property type="match status" value="1"/>
</dbReference>
<dbReference type="PANTHER" id="PTHR33692">
    <property type="entry name" value="RIBOSOME MATURATION FACTOR RIMM"/>
    <property type="match status" value="1"/>
</dbReference>
<dbReference type="PANTHER" id="PTHR33692:SF1">
    <property type="entry name" value="RIBOSOME MATURATION FACTOR RIMM"/>
    <property type="match status" value="1"/>
</dbReference>
<dbReference type="Pfam" id="PF05239">
    <property type="entry name" value="PRC"/>
    <property type="match status" value="1"/>
</dbReference>
<dbReference type="Pfam" id="PF01782">
    <property type="entry name" value="RimM"/>
    <property type="match status" value="1"/>
</dbReference>
<dbReference type="SUPFAM" id="SSF50346">
    <property type="entry name" value="PRC-barrel domain"/>
    <property type="match status" value="1"/>
</dbReference>
<dbReference type="SUPFAM" id="SSF50447">
    <property type="entry name" value="Translation proteins"/>
    <property type="match status" value="1"/>
</dbReference>
<proteinExistence type="inferred from homology"/>
<gene>
    <name evidence="1" type="primary">rimM</name>
    <name type="ordered locus">VV2787</name>
</gene>
<evidence type="ECO:0000255" key="1">
    <source>
        <dbReference type="HAMAP-Rule" id="MF_00014"/>
    </source>
</evidence>
<protein>
    <recommendedName>
        <fullName evidence="1">Ribosome maturation factor RimM</fullName>
    </recommendedName>
</protein>
<sequence length="182" mass="20965">MSMKGKETMSDERIVVGKFGSTYGIRGWLKVFSYTDNAESLFDYSPWYVNQKGEWVEFKVESWKRHNKGMVAKLEGLDVREDAHLLTNLEIAIDPAVLPELSEDEFYWRELFGMQVVTTNGYDLGVVTDMLETGSNDVLVVKANLKDAFGQKERLIPFLEEQVIIKVDREAQRIEVDWDPGF</sequence>
<keyword id="KW-0143">Chaperone</keyword>
<keyword id="KW-0963">Cytoplasm</keyword>
<keyword id="KW-0690">Ribosome biogenesis</keyword>
<keyword id="KW-0698">rRNA processing</keyword>
<feature type="chain" id="PRO_0000163387" description="Ribosome maturation factor RimM">
    <location>
        <begin position="1"/>
        <end position="182"/>
    </location>
</feature>
<feature type="domain" description="PRC barrel" evidence="1">
    <location>
        <begin position="103"/>
        <end position="182"/>
    </location>
</feature>
<comment type="function">
    <text evidence="1">An accessory protein needed during the final step in the assembly of 30S ribosomal subunit, possibly for assembly of the head region. Essential for efficient processing of 16S rRNA. May be needed both before and after RbfA during the maturation of 16S rRNA. It has affinity for free ribosomal 30S subunits but not for 70S ribosomes.</text>
</comment>
<comment type="subunit">
    <text evidence="1">Binds ribosomal protein uS19.</text>
</comment>
<comment type="subcellular location">
    <subcellularLocation>
        <location evidence="1">Cytoplasm</location>
    </subcellularLocation>
</comment>
<comment type="domain">
    <text evidence="1">The PRC barrel domain binds ribosomal protein uS19.</text>
</comment>
<comment type="similarity">
    <text evidence="1">Belongs to the RimM family.</text>
</comment>